<proteinExistence type="inferred from homology"/>
<accession>Q1RJM0</accession>
<dbReference type="EC" id="2.7.1.24" evidence="1"/>
<dbReference type="EMBL" id="CP000087">
    <property type="protein sequence ID" value="ABE04444.1"/>
    <property type="molecule type" value="Genomic_DNA"/>
</dbReference>
<dbReference type="RefSeq" id="WP_011477053.1">
    <property type="nucleotide sequence ID" value="NC_007940.1"/>
</dbReference>
<dbReference type="SMR" id="Q1RJM0"/>
<dbReference type="KEGG" id="rbe:RBE_0363"/>
<dbReference type="eggNOG" id="COG0237">
    <property type="taxonomic scope" value="Bacteria"/>
</dbReference>
<dbReference type="HOGENOM" id="CLU_057180_3_1_5"/>
<dbReference type="OrthoDB" id="9812943at2"/>
<dbReference type="UniPathway" id="UPA00241">
    <property type="reaction ID" value="UER00356"/>
</dbReference>
<dbReference type="Proteomes" id="UP000001951">
    <property type="component" value="Chromosome"/>
</dbReference>
<dbReference type="GO" id="GO:0005737">
    <property type="term" value="C:cytoplasm"/>
    <property type="evidence" value="ECO:0007669"/>
    <property type="project" value="UniProtKB-SubCell"/>
</dbReference>
<dbReference type="GO" id="GO:0005524">
    <property type="term" value="F:ATP binding"/>
    <property type="evidence" value="ECO:0007669"/>
    <property type="project" value="UniProtKB-UniRule"/>
</dbReference>
<dbReference type="GO" id="GO:0004140">
    <property type="term" value="F:dephospho-CoA kinase activity"/>
    <property type="evidence" value="ECO:0007669"/>
    <property type="project" value="UniProtKB-UniRule"/>
</dbReference>
<dbReference type="GO" id="GO:0015937">
    <property type="term" value="P:coenzyme A biosynthetic process"/>
    <property type="evidence" value="ECO:0007669"/>
    <property type="project" value="UniProtKB-UniRule"/>
</dbReference>
<dbReference type="CDD" id="cd02022">
    <property type="entry name" value="DPCK"/>
    <property type="match status" value="1"/>
</dbReference>
<dbReference type="Gene3D" id="3.40.50.300">
    <property type="entry name" value="P-loop containing nucleotide triphosphate hydrolases"/>
    <property type="match status" value="1"/>
</dbReference>
<dbReference type="HAMAP" id="MF_00376">
    <property type="entry name" value="Dephospho_CoA_kinase"/>
    <property type="match status" value="1"/>
</dbReference>
<dbReference type="InterPro" id="IPR001977">
    <property type="entry name" value="Depp_CoAkinase"/>
</dbReference>
<dbReference type="InterPro" id="IPR027417">
    <property type="entry name" value="P-loop_NTPase"/>
</dbReference>
<dbReference type="NCBIfam" id="TIGR00152">
    <property type="entry name" value="dephospho-CoA kinase"/>
    <property type="match status" value="1"/>
</dbReference>
<dbReference type="Pfam" id="PF01121">
    <property type="entry name" value="CoaE"/>
    <property type="match status" value="1"/>
</dbReference>
<dbReference type="SUPFAM" id="SSF52540">
    <property type="entry name" value="P-loop containing nucleoside triphosphate hydrolases"/>
    <property type="match status" value="1"/>
</dbReference>
<dbReference type="PROSITE" id="PS51219">
    <property type="entry name" value="DPCK"/>
    <property type="match status" value="1"/>
</dbReference>
<evidence type="ECO:0000255" key="1">
    <source>
        <dbReference type="HAMAP-Rule" id="MF_00376"/>
    </source>
</evidence>
<comment type="function">
    <text evidence="1">Catalyzes the phosphorylation of the 3'-hydroxyl group of dephosphocoenzyme A to form coenzyme A.</text>
</comment>
<comment type="catalytic activity">
    <reaction evidence="1">
        <text>3'-dephospho-CoA + ATP = ADP + CoA + H(+)</text>
        <dbReference type="Rhea" id="RHEA:18245"/>
        <dbReference type="ChEBI" id="CHEBI:15378"/>
        <dbReference type="ChEBI" id="CHEBI:30616"/>
        <dbReference type="ChEBI" id="CHEBI:57287"/>
        <dbReference type="ChEBI" id="CHEBI:57328"/>
        <dbReference type="ChEBI" id="CHEBI:456216"/>
        <dbReference type="EC" id="2.7.1.24"/>
    </reaction>
</comment>
<comment type="pathway">
    <text evidence="1">Cofactor biosynthesis; coenzyme A biosynthesis; CoA from (R)-pantothenate: step 5/5.</text>
</comment>
<comment type="subcellular location">
    <subcellularLocation>
        <location evidence="1">Cytoplasm</location>
    </subcellularLocation>
</comment>
<comment type="similarity">
    <text evidence="1">Belongs to the CoaE family.</text>
</comment>
<gene>
    <name evidence="1" type="primary">coaE</name>
    <name type="ordered locus">RBE_0363</name>
</gene>
<protein>
    <recommendedName>
        <fullName evidence="1">Dephospho-CoA kinase</fullName>
        <ecNumber evidence="1">2.7.1.24</ecNumber>
    </recommendedName>
    <alternativeName>
        <fullName evidence="1">Dephosphocoenzyme A kinase</fullName>
    </alternativeName>
</protein>
<feature type="chain" id="PRO_0000243332" description="Dephospho-CoA kinase">
    <location>
        <begin position="1"/>
        <end position="191"/>
    </location>
</feature>
<feature type="domain" description="DPCK" evidence="1">
    <location>
        <begin position="3"/>
        <end position="191"/>
    </location>
</feature>
<feature type="binding site" evidence="1">
    <location>
        <begin position="11"/>
        <end position="16"/>
    </location>
    <ligand>
        <name>ATP</name>
        <dbReference type="ChEBI" id="CHEBI:30616"/>
    </ligand>
</feature>
<name>COAE_RICBR</name>
<keyword id="KW-0067">ATP-binding</keyword>
<keyword id="KW-0173">Coenzyme A biosynthesis</keyword>
<keyword id="KW-0963">Cytoplasm</keyword>
<keyword id="KW-0418">Kinase</keyword>
<keyword id="KW-0547">Nucleotide-binding</keyword>
<keyword id="KW-0808">Transferase</keyword>
<organism>
    <name type="scientific">Rickettsia bellii (strain RML369-C)</name>
    <dbReference type="NCBI Taxonomy" id="336407"/>
    <lineage>
        <taxon>Bacteria</taxon>
        <taxon>Pseudomonadati</taxon>
        <taxon>Pseudomonadota</taxon>
        <taxon>Alphaproteobacteria</taxon>
        <taxon>Rickettsiales</taxon>
        <taxon>Rickettsiaceae</taxon>
        <taxon>Rickettsieae</taxon>
        <taxon>Rickettsia</taxon>
        <taxon>belli group</taxon>
    </lineage>
</organism>
<sequence>MLAIGITGSYASGKTFILDYLAEKGYKTFCADRCIKELYQDLKIQTGILKLLPELETFNIGKISNLIYNNDLAREKLQNFIYPLLIEKLIQFKQENVNSKFGFAEIPLLYEAKFDKYFDFVVTVHCSEEIRMQRATTRSSFDVEIYNKIKEIQLSQESKIAKADFAINSGVDMLDLEKQINNLIANLECRV</sequence>
<reference key="1">
    <citation type="journal article" date="2006" name="PLoS Genet.">
        <title>Genome sequence of Rickettsia bellii illuminates the role of amoebae in gene exchanges between intracellular pathogens.</title>
        <authorList>
            <person name="Ogata H."/>
            <person name="La Scola B."/>
            <person name="Audic S."/>
            <person name="Renesto P."/>
            <person name="Blanc G."/>
            <person name="Robert C."/>
            <person name="Fournier P.-E."/>
            <person name="Claverie J.-M."/>
            <person name="Raoult D."/>
        </authorList>
    </citation>
    <scope>NUCLEOTIDE SEQUENCE [LARGE SCALE GENOMIC DNA]</scope>
    <source>
        <strain>RML369-C</strain>
    </source>
</reference>